<protein>
    <recommendedName>
        <fullName>Probable glucuronosyltransferase Os04g0398600</fullName>
        <ecNumber>2.4.-.-</ecNumber>
    </recommendedName>
</protein>
<comment type="function">
    <text evidence="1">Involved in the synthesis of glucuronoxylan hemicellulose in secondary cell walls.</text>
</comment>
<comment type="subcellular location">
    <subcellularLocation>
        <location evidence="1">Golgi apparatus membrane</location>
        <topology evidence="1">Single-pass type II membrane protein</topology>
    </subcellularLocation>
</comment>
<comment type="similarity">
    <text evidence="3">Belongs to the glycosyltransferase 47 family.</text>
</comment>
<accession>Q7XLG3</accession>
<accession>A0A0P0W9R8</accession>
<sequence>MGSRTVGWWLLAAAVVLAAAAADSGEAERAAEQHSERISGSAGDVLEDNPVGRLKVFIYDLPRKYNKKMVNKDPRCLNHMFAAEIFMHRFLLSSAVRTLNPKEADWFYTPVYTTCDLTPAGLPLPFKSPRVMRSAIQYISHKWPFWNRTDGADHFFVVPHDFGACFHYQEEKAIERGILPLLQRATLVQTFGQENHVCLKEGSITIPPYAPPQKMQAHLIPPDTPRSIFVYFRGLFYDTGNDPEGGYYARGARASLWENFKNNPLFDISTDHPPTYYEDMQRAVFCLCPLGWAPWSPRLVEAVVFGCIPVIIADDIVLPFADAIPWEEIGVFVEEKDVPKLDTILTSMPIDDILRKQRLLANPSMKQAMLFPQPAQPRDAFHQILNGLARKLPHPEGVYLQPSDKRLNWTAGPVGDLKAW</sequence>
<evidence type="ECO:0000250" key="1"/>
<evidence type="ECO:0000255" key="2"/>
<evidence type="ECO:0000305" key="3"/>
<name>GT42_ORYSJ</name>
<keyword id="KW-0961">Cell wall biogenesis/degradation</keyword>
<keyword id="KW-0325">Glycoprotein</keyword>
<keyword id="KW-0328">Glycosyltransferase</keyword>
<keyword id="KW-0333">Golgi apparatus</keyword>
<keyword id="KW-0472">Membrane</keyword>
<keyword id="KW-1185">Reference proteome</keyword>
<keyword id="KW-0735">Signal-anchor</keyword>
<keyword id="KW-0808">Transferase</keyword>
<keyword id="KW-0812">Transmembrane</keyword>
<keyword id="KW-1133">Transmembrane helix</keyword>
<organism>
    <name type="scientific">Oryza sativa subsp. japonica</name>
    <name type="common">Rice</name>
    <dbReference type="NCBI Taxonomy" id="39947"/>
    <lineage>
        <taxon>Eukaryota</taxon>
        <taxon>Viridiplantae</taxon>
        <taxon>Streptophyta</taxon>
        <taxon>Embryophyta</taxon>
        <taxon>Tracheophyta</taxon>
        <taxon>Spermatophyta</taxon>
        <taxon>Magnoliopsida</taxon>
        <taxon>Liliopsida</taxon>
        <taxon>Poales</taxon>
        <taxon>Poaceae</taxon>
        <taxon>BOP clade</taxon>
        <taxon>Oryzoideae</taxon>
        <taxon>Oryzeae</taxon>
        <taxon>Oryzinae</taxon>
        <taxon>Oryza</taxon>
        <taxon>Oryza sativa</taxon>
    </lineage>
</organism>
<reference key="1">
    <citation type="journal article" date="2002" name="Nature">
        <title>Sequence and analysis of rice chromosome 4.</title>
        <authorList>
            <person name="Feng Q."/>
            <person name="Zhang Y."/>
            <person name="Hao P."/>
            <person name="Wang S."/>
            <person name="Fu G."/>
            <person name="Huang Y."/>
            <person name="Li Y."/>
            <person name="Zhu J."/>
            <person name="Liu Y."/>
            <person name="Hu X."/>
            <person name="Jia P."/>
            <person name="Zhang Y."/>
            <person name="Zhao Q."/>
            <person name="Ying K."/>
            <person name="Yu S."/>
            <person name="Tang Y."/>
            <person name="Weng Q."/>
            <person name="Zhang L."/>
            <person name="Lu Y."/>
            <person name="Mu J."/>
            <person name="Lu Y."/>
            <person name="Zhang L.S."/>
            <person name="Yu Z."/>
            <person name="Fan D."/>
            <person name="Liu X."/>
            <person name="Lu T."/>
            <person name="Li C."/>
            <person name="Wu Y."/>
            <person name="Sun T."/>
            <person name="Lei H."/>
            <person name="Li T."/>
            <person name="Hu H."/>
            <person name="Guan J."/>
            <person name="Wu M."/>
            <person name="Zhang R."/>
            <person name="Zhou B."/>
            <person name="Chen Z."/>
            <person name="Chen L."/>
            <person name="Jin Z."/>
            <person name="Wang R."/>
            <person name="Yin H."/>
            <person name="Cai Z."/>
            <person name="Ren S."/>
            <person name="Lv G."/>
            <person name="Gu W."/>
            <person name="Zhu G."/>
            <person name="Tu Y."/>
            <person name="Jia J."/>
            <person name="Zhang Y."/>
            <person name="Chen J."/>
            <person name="Kang H."/>
            <person name="Chen X."/>
            <person name="Shao C."/>
            <person name="Sun Y."/>
            <person name="Hu Q."/>
            <person name="Zhang X."/>
            <person name="Zhang W."/>
            <person name="Wang L."/>
            <person name="Ding C."/>
            <person name="Sheng H."/>
            <person name="Gu J."/>
            <person name="Chen S."/>
            <person name="Ni L."/>
            <person name="Zhu F."/>
            <person name="Chen W."/>
            <person name="Lan L."/>
            <person name="Lai Y."/>
            <person name="Cheng Z."/>
            <person name="Gu M."/>
            <person name="Jiang J."/>
            <person name="Li J."/>
            <person name="Hong G."/>
            <person name="Xue Y."/>
            <person name="Han B."/>
        </authorList>
    </citation>
    <scope>NUCLEOTIDE SEQUENCE [LARGE SCALE GENOMIC DNA]</scope>
    <source>
        <strain>cv. Nipponbare</strain>
    </source>
</reference>
<reference key="2">
    <citation type="journal article" date="2005" name="Nature">
        <title>The map-based sequence of the rice genome.</title>
        <authorList>
            <consortium name="International rice genome sequencing project (IRGSP)"/>
        </authorList>
    </citation>
    <scope>NUCLEOTIDE SEQUENCE [LARGE SCALE GENOMIC DNA]</scope>
    <source>
        <strain>cv. Nipponbare</strain>
    </source>
</reference>
<reference key="3">
    <citation type="journal article" date="2008" name="Nucleic Acids Res.">
        <title>The rice annotation project database (RAP-DB): 2008 update.</title>
        <authorList>
            <consortium name="The rice annotation project (RAP)"/>
        </authorList>
    </citation>
    <scope>GENOME REANNOTATION</scope>
    <source>
        <strain>cv. Nipponbare</strain>
    </source>
</reference>
<reference key="4">
    <citation type="journal article" date="2013" name="Rice">
        <title>Improvement of the Oryza sativa Nipponbare reference genome using next generation sequence and optical map data.</title>
        <authorList>
            <person name="Kawahara Y."/>
            <person name="de la Bastide M."/>
            <person name="Hamilton J.P."/>
            <person name="Kanamori H."/>
            <person name="McCombie W.R."/>
            <person name="Ouyang S."/>
            <person name="Schwartz D.C."/>
            <person name="Tanaka T."/>
            <person name="Wu J."/>
            <person name="Zhou S."/>
            <person name="Childs K.L."/>
            <person name="Davidson R.M."/>
            <person name="Lin H."/>
            <person name="Quesada-Ocampo L."/>
            <person name="Vaillancourt B."/>
            <person name="Sakai H."/>
            <person name="Lee S.S."/>
            <person name="Kim J."/>
            <person name="Numa H."/>
            <person name="Itoh T."/>
            <person name="Buell C.R."/>
            <person name="Matsumoto T."/>
        </authorList>
    </citation>
    <scope>GENOME REANNOTATION</scope>
    <source>
        <strain>cv. Nipponbare</strain>
    </source>
</reference>
<reference key="5">
    <citation type="journal article" date="2005" name="PLoS Biol.">
        <title>The genomes of Oryza sativa: a history of duplications.</title>
        <authorList>
            <person name="Yu J."/>
            <person name="Wang J."/>
            <person name="Lin W."/>
            <person name="Li S."/>
            <person name="Li H."/>
            <person name="Zhou J."/>
            <person name="Ni P."/>
            <person name="Dong W."/>
            <person name="Hu S."/>
            <person name="Zeng C."/>
            <person name="Zhang J."/>
            <person name="Zhang Y."/>
            <person name="Li R."/>
            <person name="Xu Z."/>
            <person name="Li S."/>
            <person name="Li X."/>
            <person name="Zheng H."/>
            <person name="Cong L."/>
            <person name="Lin L."/>
            <person name="Yin J."/>
            <person name="Geng J."/>
            <person name="Li G."/>
            <person name="Shi J."/>
            <person name="Liu J."/>
            <person name="Lv H."/>
            <person name="Li J."/>
            <person name="Wang J."/>
            <person name="Deng Y."/>
            <person name="Ran L."/>
            <person name="Shi X."/>
            <person name="Wang X."/>
            <person name="Wu Q."/>
            <person name="Li C."/>
            <person name="Ren X."/>
            <person name="Wang J."/>
            <person name="Wang X."/>
            <person name="Li D."/>
            <person name="Liu D."/>
            <person name="Zhang X."/>
            <person name="Ji Z."/>
            <person name="Zhao W."/>
            <person name="Sun Y."/>
            <person name="Zhang Z."/>
            <person name="Bao J."/>
            <person name="Han Y."/>
            <person name="Dong L."/>
            <person name="Ji J."/>
            <person name="Chen P."/>
            <person name="Wu S."/>
            <person name="Liu J."/>
            <person name="Xiao Y."/>
            <person name="Bu D."/>
            <person name="Tan J."/>
            <person name="Yang L."/>
            <person name="Ye C."/>
            <person name="Zhang J."/>
            <person name="Xu J."/>
            <person name="Zhou Y."/>
            <person name="Yu Y."/>
            <person name="Zhang B."/>
            <person name="Zhuang S."/>
            <person name="Wei H."/>
            <person name="Liu B."/>
            <person name="Lei M."/>
            <person name="Yu H."/>
            <person name="Li Y."/>
            <person name="Xu H."/>
            <person name="Wei S."/>
            <person name="He X."/>
            <person name="Fang L."/>
            <person name="Zhang Z."/>
            <person name="Zhang Y."/>
            <person name="Huang X."/>
            <person name="Su Z."/>
            <person name="Tong W."/>
            <person name="Li J."/>
            <person name="Tong Z."/>
            <person name="Li S."/>
            <person name="Ye J."/>
            <person name="Wang L."/>
            <person name="Fang L."/>
            <person name="Lei T."/>
            <person name="Chen C.-S."/>
            <person name="Chen H.-C."/>
            <person name="Xu Z."/>
            <person name="Li H."/>
            <person name="Huang H."/>
            <person name="Zhang F."/>
            <person name="Xu H."/>
            <person name="Li N."/>
            <person name="Zhao C."/>
            <person name="Li S."/>
            <person name="Dong L."/>
            <person name="Huang Y."/>
            <person name="Li L."/>
            <person name="Xi Y."/>
            <person name="Qi Q."/>
            <person name="Li W."/>
            <person name="Zhang B."/>
            <person name="Hu W."/>
            <person name="Zhang Y."/>
            <person name="Tian X."/>
            <person name="Jiao Y."/>
            <person name="Liang X."/>
            <person name="Jin J."/>
            <person name="Gao L."/>
            <person name="Zheng W."/>
            <person name="Hao B."/>
            <person name="Liu S.-M."/>
            <person name="Wang W."/>
            <person name="Yuan L."/>
            <person name="Cao M."/>
            <person name="McDermott J."/>
            <person name="Samudrala R."/>
            <person name="Wang J."/>
            <person name="Wong G.K.-S."/>
            <person name="Yang H."/>
        </authorList>
    </citation>
    <scope>NUCLEOTIDE SEQUENCE [LARGE SCALE GENOMIC DNA]</scope>
    <source>
        <strain>cv. Nipponbare</strain>
    </source>
</reference>
<reference key="6">
    <citation type="journal article" date="2003" name="Science">
        <title>Collection, mapping, and annotation of over 28,000 cDNA clones from japonica rice.</title>
        <authorList>
            <consortium name="The rice full-length cDNA consortium"/>
        </authorList>
    </citation>
    <scope>NUCLEOTIDE SEQUENCE [LARGE SCALE MRNA]</scope>
    <source>
        <strain>cv. Nipponbare</strain>
    </source>
</reference>
<feature type="chain" id="PRO_0000407572" description="Probable glucuronosyltransferase Os04g0398600">
    <location>
        <begin position="1"/>
        <end position="420"/>
    </location>
</feature>
<feature type="topological domain" description="Cytoplasmic" evidence="2">
    <location>
        <begin position="1"/>
        <end position="4"/>
    </location>
</feature>
<feature type="transmembrane region" description="Helical; Signal-anchor for type II membrane protein" evidence="2">
    <location>
        <begin position="5"/>
        <end position="25"/>
    </location>
</feature>
<feature type="topological domain" description="Lumenal" evidence="2">
    <location>
        <begin position="26"/>
        <end position="420"/>
    </location>
</feature>
<feature type="glycosylation site" description="N-linked (GlcNAc...) asparagine" evidence="2">
    <location>
        <position position="147"/>
    </location>
</feature>
<feature type="glycosylation site" description="N-linked (GlcNAc...) asparagine" evidence="2">
    <location>
        <position position="408"/>
    </location>
</feature>
<gene>
    <name type="ordered locus">Os04g0398600</name>
    <name type="ordered locus">LOC_Os04g32670</name>
    <name type="ORF">OsJ_14642</name>
    <name type="ORF">OSJNBa0039C07.13</name>
</gene>
<proteinExistence type="evidence at transcript level"/>
<dbReference type="EC" id="2.4.-.-"/>
<dbReference type="EMBL" id="AL731591">
    <property type="protein sequence ID" value="CAE05157.2"/>
    <property type="molecule type" value="Genomic_DNA"/>
</dbReference>
<dbReference type="EMBL" id="AP008210">
    <property type="protein sequence ID" value="BAF14587.1"/>
    <property type="molecule type" value="Genomic_DNA"/>
</dbReference>
<dbReference type="EMBL" id="AP014960">
    <property type="protein sequence ID" value="BAS89024.1"/>
    <property type="molecule type" value="Genomic_DNA"/>
</dbReference>
<dbReference type="EMBL" id="CM000141">
    <property type="protein sequence ID" value="EAZ30593.1"/>
    <property type="molecule type" value="Genomic_DNA"/>
</dbReference>
<dbReference type="EMBL" id="AK073335">
    <property type="protein sequence ID" value="BAG93402.1"/>
    <property type="molecule type" value="mRNA"/>
</dbReference>
<dbReference type="EMBL" id="AK107473">
    <property type="protein sequence ID" value="BAG98058.1"/>
    <property type="molecule type" value="mRNA"/>
</dbReference>
<dbReference type="RefSeq" id="XP_015635699.1">
    <property type="nucleotide sequence ID" value="XM_015780213.1"/>
</dbReference>
<dbReference type="FunCoup" id="Q7XLG3">
    <property type="interactions" value="1"/>
</dbReference>
<dbReference type="STRING" id="39947.Q7XLG3"/>
<dbReference type="CAZy" id="GT47">
    <property type="family name" value="Glycosyltransferase Family 47"/>
</dbReference>
<dbReference type="PaxDb" id="39947-Q7XLG3"/>
<dbReference type="EnsemblPlants" id="Os04t0398600-01">
    <property type="protein sequence ID" value="Os04t0398600-01"/>
    <property type="gene ID" value="Os04g0398600"/>
</dbReference>
<dbReference type="EnsemblPlants" id="Os04t0398600-02">
    <property type="protein sequence ID" value="Os04t0398600-02"/>
    <property type="gene ID" value="Os04g0398600"/>
</dbReference>
<dbReference type="Gramene" id="Os04t0398600-01">
    <property type="protein sequence ID" value="Os04t0398600-01"/>
    <property type="gene ID" value="Os04g0398600"/>
</dbReference>
<dbReference type="Gramene" id="Os04t0398600-02">
    <property type="protein sequence ID" value="Os04t0398600-02"/>
    <property type="gene ID" value="Os04g0398600"/>
</dbReference>
<dbReference type="KEGG" id="dosa:Os04g0398600"/>
<dbReference type="eggNOG" id="KOG1021">
    <property type="taxonomic scope" value="Eukaryota"/>
</dbReference>
<dbReference type="HOGENOM" id="CLU_039682_1_0_1"/>
<dbReference type="InParanoid" id="Q7XLG3"/>
<dbReference type="OMA" id="RILWHES"/>
<dbReference type="OrthoDB" id="1924787at2759"/>
<dbReference type="Proteomes" id="UP000000763">
    <property type="component" value="Chromosome 4"/>
</dbReference>
<dbReference type="Proteomes" id="UP000007752">
    <property type="component" value="Chromosome 4"/>
</dbReference>
<dbReference type="Proteomes" id="UP000059680">
    <property type="component" value="Chromosome 4"/>
</dbReference>
<dbReference type="ExpressionAtlas" id="Q7XLG3">
    <property type="expression patterns" value="baseline and differential"/>
</dbReference>
<dbReference type="GO" id="GO:0000139">
    <property type="term" value="C:Golgi membrane"/>
    <property type="evidence" value="ECO:0007669"/>
    <property type="project" value="UniProtKB-SubCell"/>
</dbReference>
<dbReference type="GO" id="GO:0016757">
    <property type="term" value="F:glycosyltransferase activity"/>
    <property type="evidence" value="ECO:0007669"/>
    <property type="project" value="UniProtKB-KW"/>
</dbReference>
<dbReference type="GO" id="GO:0071555">
    <property type="term" value="P:cell wall organization"/>
    <property type="evidence" value="ECO:0007669"/>
    <property type="project" value="UniProtKB-KW"/>
</dbReference>
<dbReference type="GO" id="GO:0010417">
    <property type="term" value="P:glucuronoxylan biosynthetic process"/>
    <property type="evidence" value="ECO:0000318"/>
    <property type="project" value="GO_Central"/>
</dbReference>
<dbReference type="GO" id="GO:0009834">
    <property type="term" value="P:plant-type secondary cell wall biogenesis"/>
    <property type="evidence" value="ECO:0000318"/>
    <property type="project" value="GO_Central"/>
</dbReference>
<dbReference type="GO" id="GO:0006486">
    <property type="term" value="P:protein glycosylation"/>
    <property type="evidence" value="ECO:0007669"/>
    <property type="project" value="InterPro"/>
</dbReference>
<dbReference type="InterPro" id="IPR004263">
    <property type="entry name" value="Exostosin"/>
</dbReference>
<dbReference type="InterPro" id="IPR040911">
    <property type="entry name" value="Exostosin_GT47"/>
</dbReference>
<dbReference type="PANTHER" id="PTHR11062">
    <property type="entry name" value="EXOSTOSIN HEPARAN SULFATE GLYCOSYLTRANSFERASE -RELATED"/>
    <property type="match status" value="1"/>
</dbReference>
<dbReference type="PANTHER" id="PTHR11062:SF239">
    <property type="entry name" value="GLUCURONOSYLTRANSFERASE OS04G0398600-RELATED"/>
    <property type="match status" value="1"/>
</dbReference>
<dbReference type="Pfam" id="PF03016">
    <property type="entry name" value="Exostosin_GT47"/>
    <property type="match status" value="1"/>
</dbReference>